<dbReference type="EC" id="3.5.1.135" evidence="2"/>
<dbReference type="EMBL" id="BA000032">
    <property type="protein sequence ID" value="BAC62757.1"/>
    <property type="molecule type" value="Genomic_DNA"/>
</dbReference>
<dbReference type="RefSeq" id="NP_800924.1">
    <property type="nucleotide sequence ID" value="NC_004605.1"/>
</dbReference>
<dbReference type="SMR" id="Q87GA3"/>
<dbReference type="GeneID" id="1192110"/>
<dbReference type="KEGG" id="vpa:VPA1414"/>
<dbReference type="PATRIC" id="fig|223926.6.peg.4341"/>
<dbReference type="eggNOG" id="COG3097">
    <property type="taxonomic scope" value="Bacteria"/>
</dbReference>
<dbReference type="HOGENOM" id="CLU_152586_0_0_6"/>
<dbReference type="Proteomes" id="UP000002493">
    <property type="component" value="Chromosome 2"/>
</dbReference>
<dbReference type="GO" id="GO:0005829">
    <property type="term" value="C:cytosol"/>
    <property type="evidence" value="ECO:0007669"/>
    <property type="project" value="TreeGrafter"/>
</dbReference>
<dbReference type="GO" id="GO:0016813">
    <property type="term" value="F:hydrolase activity, acting on carbon-nitrogen (but not peptide) bonds, in linear amidines"/>
    <property type="evidence" value="ECO:0007669"/>
    <property type="project" value="UniProtKB-UniRule"/>
</dbReference>
<dbReference type="GO" id="GO:0106251">
    <property type="term" value="F:N4-acetylcytidine amidohydrolase activity"/>
    <property type="evidence" value="ECO:0007669"/>
    <property type="project" value="RHEA"/>
</dbReference>
<dbReference type="CDD" id="cd06552">
    <property type="entry name" value="ASCH_yqfb_like"/>
    <property type="match status" value="1"/>
</dbReference>
<dbReference type="Gene3D" id="2.30.130.30">
    <property type="entry name" value="Hypothetical protein"/>
    <property type="match status" value="1"/>
</dbReference>
<dbReference type="HAMAP" id="MF_00684">
    <property type="entry name" value="ac4C_amidohydr"/>
    <property type="match status" value="1"/>
</dbReference>
<dbReference type="InterPro" id="IPR008314">
    <property type="entry name" value="AC4CH"/>
</dbReference>
<dbReference type="InterPro" id="IPR007374">
    <property type="entry name" value="ASCH_domain"/>
</dbReference>
<dbReference type="InterPro" id="IPR015947">
    <property type="entry name" value="PUA-like_sf"/>
</dbReference>
<dbReference type="NCBIfam" id="NF003443">
    <property type="entry name" value="PRK04980.1"/>
    <property type="match status" value="1"/>
</dbReference>
<dbReference type="PANTHER" id="PTHR38088">
    <property type="entry name" value="UCP029143 FAMILY PROTEIN"/>
    <property type="match status" value="1"/>
</dbReference>
<dbReference type="PANTHER" id="PTHR38088:SF2">
    <property type="entry name" value="UCP029143 FAMILY PROTEIN"/>
    <property type="match status" value="1"/>
</dbReference>
<dbReference type="Pfam" id="PF04266">
    <property type="entry name" value="ASCH"/>
    <property type="match status" value="1"/>
</dbReference>
<dbReference type="PIRSF" id="PIRSF029143">
    <property type="entry name" value="UCP029143"/>
    <property type="match status" value="1"/>
</dbReference>
<dbReference type="SMART" id="SM01022">
    <property type="entry name" value="ASCH"/>
    <property type="match status" value="1"/>
</dbReference>
<dbReference type="SUPFAM" id="SSF88697">
    <property type="entry name" value="PUA domain-like"/>
    <property type="match status" value="1"/>
</dbReference>
<accession>Q87GA3</accession>
<organism>
    <name type="scientific">Vibrio parahaemolyticus serotype O3:K6 (strain RIMD 2210633)</name>
    <dbReference type="NCBI Taxonomy" id="223926"/>
    <lineage>
        <taxon>Bacteria</taxon>
        <taxon>Pseudomonadati</taxon>
        <taxon>Pseudomonadota</taxon>
        <taxon>Gammaproteobacteria</taxon>
        <taxon>Vibrionales</taxon>
        <taxon>Vibrionaceae</taxon>
        <taxon>Vibrio</taxon>
    </lineage>
</organism>
<keyword id="KW-0378">Hydrolase</keyword>
<sequence length="107" mass="12570">MSSHPTKITFFEFLTPLITSGQKTITIRDESESHYVPNTEVEVFTLETDRKVCDIKILSVEPLNFDEINEFHAEQEAIELPKLKQLIREIYPNIDKLFVIEYELIKK</sequence>
<comment type="function">
    <text evidence="2">Catalyzes the hydrolysis of N(4)-acetylcytidine (ac4C).</text>
</comment>
<comment type="catalytic activity">
    <reaction evidence="2">
        <text>N(4)-acetylcytidine + H2O = cytidine + acetate + H(+)</text>
        <dbReference type="Rhea" id="RHEA:62932"/>
        <dbReference type="ChEBI" id="CHEBI:15377"/>
        <dbReference type="ChEBI" id="CHEBI:15378"/>
        <dbReference type="ChEBI" id="CHEBI:17562"/>
        <dbReference type="ChEBI" id="CHEBI:30089"/>
        <dbReference type="ChEBI" id="CHEBI:70989"/>
        <dbReference type="EC" id="3.5.1.135"/>
    </reaction>
</comment>
<comment type="catalytic activity">
    <reaction evidence="2">
        <text>N(4)-acetyl-2'-deoxycytidine + H2O = 2'-deoxycytidine + acetate + H(+)</text>
        <dbReference type="Rhea" id="RHEA:62936"/>
        <dbReference type="ChEBI" id="CHEBI:15377"/>
        <dbReference type="ChEBI" id="CHEBI:15378"/>
        <dbReference type="ChEBI" id="CHEBI:15698"/>
        <dbReference type="ChEBI" id="CHEBI:30089"/>
        <dbReference type="ChEBI" id="CHEBI:146133"/>
        <dbReference type="EC" id="3.5.1.135"/>
    </reaction>
</comment>
<comment type="catalytic activity">
    <reaction evidence="2">
        <text>N(4)-acetylcytosine + H2O = cytosine + acetate + H(+)</text>
        <dbReference type="Rhea" id="RHEA:62940"/>
        <dbReference type="ChEBI" id="CHEBI:15377"/>
        <dbReference type="ChEBI" id="CHEBI:15378"/>
        <dbReference type="ChEBI" id="CHEBI:16040"/>
        <dbReference type="ChEBI" id="CHEBI:30089"/>
        <dbReference type="ChEBI" id="CHEBI:146134"/>
        <dbReference type="EC" id="3.5.1.135"/>
    </reaction>
</comment>
<comment type="similarity">
    <text evidence="2">Belongs to the N(4)-acetylcytidine amidohydrolase family.</text>
</comment>
<feature type="chain" id="PRO_0000214610" description="N(4)-acetylcytidine amidohydrolase">
    <location>
        <begin position="1"/>
        <end position="107"/>
    </location>
</feature>
<feature type="domain" description="ASCH" evidence="1">
    <location>
        <begin position="9"/>
        <end position="105"/>
    </location>
</feature>
<feature type="active site" description="Proton acceptor" evidence="2">
    <location>
        <position position="23"/>
    </location>
</feature>
<feature type="active site" description="Nucleophile" evidence="2">
    <location>
        <position position="26"/>
    </location>
</feature>
<feature type="active site" description="Proton donor" evidence="2">
    <location>
        <position position="76"/>
    </location>
</feature>
<protein>
    <recommendedName>
        <fullName evidence="2">N(4)-acetylcytidine amidohydrolase</fullName>
        <shortName evidence="2">ac4C amidohydrolase</shortName>
        <ecNumber evidence="2">3.5.1.135</ecNumber>
    </recommendedName>
</protein>
<proteinExistence type="inferred from homology"/>
<evidence type="ECO:0000255" key="1"/>
<evidence type="ECO:0000255" key="2">
    <source>
        <dbReference type="HAMAP-Rule" id="MF_00684"/>
    </source>
</evidence>
<reference key="1">
    <citation type="journal article" date="2003" name="Lancet">
        <title>Genome sequence of Vibrio parahaemolyticus: a pathogenic mechanism distinct from that of V. cholerae.</title>
        <authorList>
            <person name="Makino K."/>
            <person name="Oshima K."/>
            <person name="Kurokawa K."/>
            <person name="Yokoyama K."/>
            <person name="Uda T."/>
            <person name="Tagomori K."/>
            <person name="Iijima Y."/>
            <person name="Najima M."/>
            <person name="Nakano M."/>
            <person name="Yamashita A."/>
            <person name="Kubota Y."/>
            <person name="Kimura S."/>
            <person name="Yasunaga T."/>
            <person name="Honda T."/>
            <person name="Shinagawa H."/>
            <person name="Hattori M."/>
            <person name="Iida T."/>
        </authorList>
    </citation>
    <scope>NUCLEOTIDE SEQUENCE [LARGE SCALE GENOMIC DNA]</scope>
    <source>
        <strain>RIMD 2210633</strain>
    </source>
</reference>
<name>AC4CH_VIBPA</name>
<gene>
    <name type="ordered locus">VPA1414</name>
</gene>